<evidence type="ECO:0000255" key="1">
    <source>
        <dbReference type="HAMAP-Rule" id="MF_00811"/>
    </source>
</evidence>
<evidence type="ECO:0000305" key="2"/>
<protein>
    <recommendedName>
        <fullName evidence="1">2,3,4,5-tetrahydropyridine-2,6-dicarboxylate N-succinyltransferase</fullName>
        <ecNumber evidence="1">2.3.1.117</ecNumber>
    </recommendedName>
    <alternativeName>
        <fullName evidence="1">Tetrahydrodipicolinate N-succinyltransferase</fullName>
        <shortName evidence="1">THDP succinyltransferase</shortName>
        <shortName evidence="1">THP succinyltransferase</shortName>
        <shortName evidence="1">Tetrahydropicolinate succinylase</shortName>
    </alternativeName>
</protein>
<reference key="1">
    <citation type="journal article" date="2006" name="J. Bacteriol.">
        <title>Comparative genomic analysis of three strains of Ehrlichia ruminantium reveals an active process of genome size plasticity.</title>
        <authorList>
            <person name="Frutos R."/>
            <person name="Viari A."/>
            <person name="Ferraz C."/>
            <person name="Morgat A."/>
            <person name="Eychenie S."/>
            <person name="Kandassamy Y."/>
            <person name="Chantal I."/>
            <person name="Bensaid A."/>
            <person name="Coissac E."/>
            <person name="Vachiery N."/>
            <person name="Demaille J."/>
            <person name="Martinez D."/>
        </authorList>
    </citation>
    <scope>NUCLEOTIDE SEQUENCE [LARGE SCALE GENOMIC DNA]</scope>
    <source>
        <strain>Gardel</strain>
    </source>
</reference>
<feature type="chain" id="PRO_0000196936" description="2,3,4,5-tetrahydropyridine-2,6-dicarboxylate N-succinyltransferase">
    <location>
        <begin position="1"/>
        <end position="284"/>
    </location>
</feature>
<feature type="binding site" evidence="1">
    <location>
        <position position="111"/>
    </location>
    <ligand>
        <name>substrate</name>
    </ligand>
</feature>
<feature type="binding site" evidence="1">
    <location>
        <position position="148"/>
    </location>
    <ligand>
        <name>substrate</name>
    </ligand>
</feature>
<comment type="catalytic activity">
    <reaction evidence="1">
        <text>(S)-2,3,4,5-tetrahydrodipicolinate + succinyl-CoA + H2O = (S)-2-succinylamino-6-oxoheptanedioate + CoA</text>
        <dbReference type="Rhea" id="RHEA:17325"/>
        <dbReference type="ChEBI" id="CHEBI:15377"/>
        <dbReference type="ChEBI" id="CHEBI:15685"/>
        <dbReference type="ChEBI" id="CHEBI:16845"/>
        <dbReference type="ChEBI" id="CHEBI:57287"/>
        <dbReference type="ChEBI" id="CHEBI:57292"/>
        <dbReference type="EC" id="2.3.1.117"/>
    </reaction>
</comment>
<comment type="pathway">
    <text evidence="1">Amino-acid biosynthesis; L-lysine biosynthesis via DAP pathway; LL-2,6-diaminopimelate from (S)-tetrahydrodipicolinate (succinylase route): step 1/3.</text>
</comment>
<comment type="subunit">
    <text evidence="1">Homotrimer.</text>
</comment>
<comment type="subcellular location">
    <subcellularLocation>
        <location evidence="1">Cytoplasm</location>
    </subcellularLocation>
</comment>
<comment type="similarity">
    <text evidence="1">Belongs to the transferase hexapeptide repeat family.</text>
</comment>
<comment type="sequence caution" evidence="2">
    <conflict type="erroneous initiation">
        <sequence resource="EMBL-CDS" id="CAI27479"/>
    </conflict>
</comment>
<proteinExistence type="inferred from homology"/>
<gene>
    <name evidence="1" type="primary">dapD</name>
    <name type="ordered locus">ERGA_CDS_00270</name>
</gene>
<sequence length="284" mass="30794">MVNTSDFKEIIENAWCDIANISTNTSITGVIDEIMDLLDQGKVRVSEKINGQWIVNEWIKKAILLSFRIYDMKFVYTNCHDSIIGNFSWFDKIPLKFGQWNADNFKQAKIRVVPGAIVRKSAYIAPGAVLMPSFVNVGAYVGEGTMVDTWASVGSCAQVGKNCHISGGAGIGGVLEPLTASPVIIEDNCFIGARSEIVEGVIVEEGAVVSMGVYIGASTKIIDRTSGEVFFGRVPAYSVVVPGSYSSGNVSIYCAIIVKKVDQNTRNKVSINELLRDNYAATSI</sequence>
<organism>
    <name type="scientific">Ehrlichia ruminantium (strain Gardel)</name>
    <dbReference type="NCBI Taxonomy" id="302409"/>
    <lineage>
        <taxon>Bacteria</taxon>
        <taxon>Pseudomonadati</taxon>
        <taxon>Pseudomonadota</taxon>
        <taxon>Alphaproteobacteria</taxon>
        <taxon>Rickettsiales</taxon>
        <taxon>Anaplasmataceae</taxon>
        <taxon>Ehrlichia</taxon>
    </lineage>
</organism>
<name>DAPD_EHRRG</name>
<keyword id="KW-0012">Acyltransferase</keyword>
<keyword id="KW-0028">Amino-acid biosynthesis</keyword>
<keyword id="KW-0963">Cytoplasm</keyword>
<keyword id="KW-0220">Diaminopimelate biosynthesis</keyword>
<keyword id="KW-0457">Lysine biosynthesis</keyword>
<keyword id="KW-0677">Repeat</keyword>
<keyword id="KW-0808">Transferase</keyword>
<dbReference type="EC" id="2.3.1.117" evidence="1"/>
<dbReference type="EMBL" id="CR925677">
    <property type="protein sequence ID" value="CAI27479.1"/>
    <property type="status" value="ALT_INIT"/>
    <property type="molecule type" value="Genomic_DNA"/>
</dbReference>
<dbReference type="RefSeq" id="WP_011154722.1">
    <property type="nucleotide sequence ID" value="NC_006831.1"/>
</dbReference>
<dbReference type="SMR" id="Q5FF20"/>
<dbReference type="GeneID" id="33057613"/>
<dbReference type="KEGG" id="erg:ERGA_CDS_00270"/>
<dbReference type="HOGENOM" id="CLU_050859_0_1_5"/>
<dbReference type="OrthoDB" id="9775362at2"/>
<dbReference type="UniPathway" id="UPA00034">
    <property type="reaction ID" value="UER00019"/>
</dbReference>
<dbReference type="Proteomes" id="UP000000533">
    <property type="component" value="Chromosome"/>
</dbReference>
<dbReference type="GO" id="GO:0005737">
    <property type="term" value="C:cytoplasm"/>
    <property type="evidence" value="ECO:0007669"/>
    <property type="project" value="UniProtKB-SubCell"/>
</dbReference>
<dbReference type="GO" id="GO:0008666">
    <property type="term" value="F:2,3,4,5-tetrahydropyridine-2,6-dicarboxylate N-succinyltransferase activity"/>
    <property type="evidence" value="ECO:0007669"/>
    <property type="project" value="UniProtKB-UniRule"/>
</dbReference>
<dbReference type="GO" id="GO:0019877">
    <property type="term" value="P:diaminopimelate biosynthetic process"/>
    <property type="evidence" value="ECO:0007669"/>
    <property type="project" value="UniProtKB-UniRule"/>
</dbReference>
<dbReference type="GO" id="GO:0009089">
    <property type="term" value="P:lysine biosynthetic process via diaminopimelate"/>
    <property type="evidence" value="ECO:0007669"/>
    <property type="project" value="UniProtKB-UniRule"/>
</dbReference>
<dbReference type="CDD" id="cd03350">
    <property type="entry name" value="LbH_THP_succinylT"/>
    <property type="match status" value="1"/>
</dbReference>
<dbReference type="Gene3D" id="2.160.10.10">
    <property type="entry name" value="Hexapeptide repeat proteins"/>
    <property type="match status" value="1"/>
</dbReference>
<dbReference type="Gene3D" id="1.10.166.10">
    <property type="entry name" value="Tetrahydrodipicolinate-N-succinyltransferase, N-terminal domain"/>
    <property type="match status" value="1"/>
</dbReference>
<dbReference type="HAMAP" id="MF_00811">
    <property type="entry name" value="DapD"/>
    <property type="match status" value="1"/>
</dbReference>
<dbReference type="InterPro" id="IPR005664">
    <property type="entry name" value="DapD_Trfase_Hexpep_rpt_fam"/>
</dbReference>
<dbReference type="InterPro" id="IPR001451">
    <property type="entry name" value="Hexapep"/>
</dbReference>
<dbReference type="InterPro" id="IPR023180">
    <property type="entry name" value="THP_succinylTrfase_dom1"/>
</dbReference>
<dbReference type="InterPro" id="IPR037133">
    <property type="entry name" value="THP_succinylTrfase_N_sf"/>
</dbReference>
<dbReference type="InterPro" id="IPR050179">
    <property type="entry name" value="Trans_hexapeptide_repeat"/>
</dbReference>
<dbReference type="InterPro" id="IPR011004">
    <property type="entry name" value="Trimer_LpxA-like_sf"/>
</dbReference>
<dbReference type="NCBIfam" id="TIGR00965">
    <property type="entry name" value="dapD"/>
    <property type="match status" value="1"/>
</dbReference>
<dbReference type="NCBIfam" id="NF008808">
    <property type="entry name" value="PRK11830.1"/>
    <property type="match status" value="1"/>
</dbReference>
<dbReference type="PANTHER" id="PTHR43300:SF10">
    <property type="entry name" value="2,3,4,5-TETRAHYDROPYRIDINE-2,6-DICARBOXYLATE N-ACETYLTRANSFERASE"/>
    <property type="match status" value="1"/>
</dbReference>
<dbReference type="PANTHER" id="PTHR43300">
    <property type="entry name" value="ACETYLTRANSFERASE"/>
    <property type="match status" value="1"/>
</dbReference>
<dbReference type="Pfam" id="PF14602">
    <property type="entry name" value="Hexapep_2"/>
    <property type="match status" value="1"/>
</dbReference>
<dbReference type="Pfam" id="PF14805">
    <property type="entry name" value="THDPS_N_2"/>
    <property type="match status" value="1"/>
</dbReference>
<dbReference type="SUPFAM" id="SSF51161">
    <property type="entry name" value="Trimeric LpxA-like enzymes"/>
    <property type="match status" value="1"/>
</dbReference>
<accession>Q5FF20</accession>